<accession>O51141</accession>
<gene>
    <name type="primary">ssb</name>
    <name type="ordered locus">BB_0114</name>
</gene>
<dbReference type="EMBL" id="AE000783">
    <property type="protein sequence ID" value="AAC66492.1"/>
    <property type="molecule type" value="Genomic_DNA"/>
</dbReference>
<dbReference type="PIR" id="B70114">
    <property type="entry name" value="B70114"/>
</dbReference>
<dbReference type="RefSeq" id="NP_212248.1">
    <property type="nucleotide sequence ID" value="NC_001318.1"/>
</dbReference>
<dbReference type="RefSeq" id="WP_002657080.1">
    <property type="nucleotide sequence ID" value="NC_001318.1"/>
</dbReference>
<dbReference type="SMR" id="O51141"/>
<dbReference type="STRING" id="224326.BB_0114"/>
<dbReference type="PaxDb" id="224326-BB_0114"/>
<dbReference type="EnsemblBacteria" id="AAC66492">
    <property type="protein sequence ID" value="AAC66492"/>
    <property type="gene ID" value="BB_0114"/>
</dbReference>
<dbReference type="KEGG" id="bbu:BB_0114"/>
<dbReference type="PATRIC" id="fig|224326.49.peg.512"/>
<dbReference type="HOGENOM" id="CLU_078758_6_0_12"/>
<dbReference type="OrthoDB" id="9809878at2"/>
<dbReference type="Proteomes" id="UP000001807">
    <property type="component" value="Chromosome"/>
</dbReference>
<dbReference type="GO" id="GO:0009295">
    <property type="term" value="C:nucleoid"/>
    <property type="evidence" value="ECO:0007669"/>
    <property type="project" value="TreeGrafter"/>
</dbReference>
<dbReference type="GO" id="GO:0003697">
    <property type="term" value="F:single-stranded DNA binding"/>
    <property type="evidence" value="ECO:0007669"/>
    <property type="project" value="UniProtKB-UniRule"/>
</dbReference>
<dbReference type="GO" id="GO:0006260">
    <property type="term" value="P:DNA replication"/>
    <property type="evidence" value="ECO:0007669"/>
    <property type="project" value="InterPro"/>
</dbReference>
<dbReference type="CDD" id="cd04496">
    <property type="entry name" value="SSB_OBF"/>
    <property type="match status" value="1"/>
</dbReference>
<dbReference type="Gene3D" id="2.40.50.140">
    <property type="entry name" value="Nucleic acid-binding proteins"/>
    <property type="match status" value="1"/>
</dbReference>
<dbReference type="HAMAP" id="MF_00984">
    <property type="entry name" value="SSB"/>
    <property type="match status" value="1"/>
</dbReference>
<dbReference type="InterPro" id="IPR012340">
    <property type="entry name" value="NA-bd_OB-fold"/>
</dbReference>
<dbReference type="InterPro" id="IPR000424">
    <property type="entry name" value="Primosome_PriB/ssb"/>
</dbReference>
<dbReference type="InterPro" id="IPR011344">
    <property type="entry name" value="ssDNA-bd"/>
</dbReference>
<dbReference type="NCBIfam" id="TIGR00621">
    <property type="entry name" value="ssb"/>
    <property type="match status" value="1"/>
</dbReference>
<dbReference type="PANTHER" id="PTHR10302">
    <property type="entry name" value="SINGLE-STRANDED DNA-BINDING PROTEIN"/>
    <property type="match status" value="1"/>
</dbReference>
<dbReference type="PANTHER" id="PTHR10302:SF0">
    <property type="entry name" value="SINGLE-STRANDED DNA-BINDING PROTEIN, MITOCHONDRIAL"/>
    <property type="match status" value="1"/>
</dbReference>
<dbReference type="Pfam" id="PF00436">
    <property type="entry name" value="SSB"/>
    <property type="match status" value="1"/>
</dbReference>
<dbReference type="SUPFAM" id="SSF50249">
    <property type="entry name" value="Nucleic acid-binding proteins"/>
    <property type="match status" value="1"/>
</dbReference>
<dbReference type="PROSITE" id="PS50935">
    <property type="entry name" value="SSB"/>
    <property type="match status" value="1"/>
</dbReference>
<sequence length="149" mass="17166">MADINSLVLSGRLTRDSELSYTESGMAVLRFSIANNRRMKKNDEWIDYPQYFDCVIFSKRAESLNDYLKKGKQVVVSGSLKYESWQDRNTGDKRSKVNIFVDNLQMFSSGSNTIQMQDSDVNSLTNHKKEDVVKDIDIVDDKFSEDIPF</sequence>
<reference key="1">
    <citation type="journal article" date="1997" name="Nature">
        <title>Genomic sequence of a Lyme disease spirochaete, Borrelia burgdorferi.</title>
        <authorList>
            <person name="Fraser C.M."/>
            <person name="Casjens S."/>
            <person name="Huang W.M."/>
            <person name="Sutton G.G."/>
            <person name="Clayton R.A."/>
            <person name="Lathigra R."/>
            <person name="White O."/>
            <person name="Ketchum K.A."/>
            <person name="Dodson R.J."/>
            <person name="Hickey E.K."/>
            <person name="Gwinn M.L."/>
            <person name="Dougherty B.A."/>
            <person name="Tomb J.-F."/>
            <person name="Fleischmann R.D."/>
            <person name="Richardson D.L."/>
            <person name="Peterson J.D."/>
            <person name="Kerlavage A.R."/>
            <person name="Quackenbush J."/>
            <person name="Salzberg S.L."/>
            <person name="Hanson M."/>
            <person name="van Vugt R."/>
            <person name="Palmer N."/>
            <person name="Adams M.D."/>
            <person name="Gocayne J.D."/>
            <person name="Weidman J.F."/>
            <person name="Utterback T.R."/>
            <person name="Watthey L."/>
            <person name="McDonald L.A."/>
            <person name="Artiach P."/>
            <person name="Bowman C."/>
            <person name="Garland S.A."/>
            <person name="Fujii C."/>
            <person name="Cotton M.D."/>
            <person name="Horst K."/>
            <person name="Roberts K.M."/>
            <person name="Hatch B."/>
            <person name="Smith H.O."/>
            <person name="Venter J.C."/>
        </authorList>
    </citation>
    <scope>NUCLEOTIDE SEQUENCE [LARGE SCALE GENOMIC DNA]</scope>
    <source>
        <strain>ATCC 35210 / DSM 4680 / CIP 102532 / B31</strain>
    </source>
</reference>
<proteinExistence type="inferred from homology"/>
<name>SSB_BORBU</name>
<protein>
    <recommendedName>
        <fullName evidence="1">Single-stranded DNA-binding protein</fullName>
        <shortName evidence="1">SSB</shortName>
    </recommendedName>
</protein>
<feature type="chain" id="PRO_0000096008" description="Single-stranded DNA-binding protein">
    <location>
        <begin position="1"/>
        <end position="149"/>
    </location>
</feature>
<feature type="domain" description="SSB" evidence="1">
    <location>
        <begin position="4"/>
        <end position="108"/>
    </location>
</feature>
<comment type="subunit">
    <text evidence="1">Homotetramer.</text>
</comment>
<evidence type="ECO:0000255" key="1">
    <source>
        <dbReference type="HAMAP-Rule" id="MF_00984"/>
    </source>
</evidence>
<keyword id="KW-0238">DNA-binding</keyword>
<keyword id="KW-1185">Reference proteome</keyword>
<organism>
    <name type="scientific">Borreliella burgdorferi (strain ATCC 35210 / DSM 4680 / CIP 102532 / B31)</name>
    <name type="common">Borrelia burgdorferi</name>
    <dbReference type="NCBI Taxonomy" id="224326"/>
    <lineage>
        <taxon>Bacteria</taxon>
        <taxon>Pseudomonadati</taxon>
        <taxon>Spirochaetota</taxon>
        <taxon>Spirochaetia</taxon>
        <taxon>Spirochaetales</taxon>
        <taxon>Borreliaceae</taxon>
        <taxon>Borreliella</taxon>
    </lineage>
</organism>